<reference key="1">
    <citation type="journal article" date="2007" name="ISME J.">
        <title>Population level functional diversity in a microbial community revealed by comparative genomic and metagenomic analyses.</title>
        <authorList>
            <person name="Bhaya D."/>
            <person name="Grossman A.R."/>
            <person name="Steunou A.-S."/>
            <person name="Khuri N."/>
            <person name="Cohan F.M."/>
            <person name="Hamamura N."/>
            <person name="Melendrez M.C."/>
            <person name="Bateson M.M."/>
            <person name="Ward D.M."/>
            <person name="Heidelberg J.F."/>
        </authorList>
    </citation>
    <scope>NUCLEOTIDE SEQUENCE [LARGE SCALE GENOMIC DNA]</scope>
    <source>
        <strain>JA-3-3Ab</strain>
    </source>
</reference>
<protein>
    <recommendedName>
        <fullName evidence="1">Aspartyl/glutamyl-tRNA(Asn/Gln) amidotransferase subunit B</fullName>
        <shortName evidence="1">Asp/Glu-ADT subunit B</shortName>
        <ecNumber evidence="1">6.3.5.-</ecNumber>
    </recommendedName>
</protein>
<comment type="function">
    <text evidence="1">Allows the formation of correctly charged Asn-tRNA(Asn) or Gln-tRNA(Gln) through the transamidation of misacylated Asp-tRNA(Asn) or Glu-tRNA(Gln) in organisms which lack either or both of asparaginyl-tRNA or glutaminyl-tRNA synthetases. The reaction takes place in the presence of glutamine and ATP through an activated phospho-Asp-tRNA(Asn) or phospho-Glu-tRNA(Gln).</text>
</comment>
<comment type="catalytic activity">
    <reaction evidence="1">
        <text>L-glutamyl-tRNA(Gln) + L-glutamine + ATP + H2O = L-glutaminyl-tRNA(Gln) + L-glutamate + ADP + phosphate + H(+)</text>
        <dbReference type="Rhea" id="RHEA:17521"/>
        <dbReference type="Rhea" id="RHEA-COMP:9681"/>
        <dbReference type="Rhea" id="RHEA-COMP:9684"/>
        <dbReference type="ChEBI" id="CHEBI:15377"/>
        <dbReference type="ChEBI" id="CHEBI:15378"/>
        <dbReference type="ChEBI" id="CHEBI:29985"/>
        <dbReference type="ChEBI" id="CHEBI:30616"/>
        <dbReference type="ChEBI" id="CHEBI:43474"/>
        <dbReference type="ChEBI" id="CHEBI:58359"/>
        <dbReference type="ChEBI" id="CHEBI:78520"/>
        <dbReference type="ChEBI" id="CHEBI:78521"/>
        <dbReference type="ChEBI" id="CHEBI:456216"/>
    </reaction>
</comment>
<comment type="catalytic activity">
    <reaction evidence="1">
        <text>L-aspartyl-tRNA(Asn) + L-glutamine + ATP + H2O = L-asparaginyl-tRNA(Asn) + L-glutamate + ADP + phosphate + 2 H(+)</text>
        <dbReference type="Rhea" id="RHEA:14513"/>
        <dbReference type="Rhea" id="RHEA-COMP:9674"/>
        <dbReference type="Rhea" id="RHEA-COMP:9677"/>
        <dbReference type="ChEBI" id="CHEBI:15377"/>
        <dbReference type="ChEBI" id="CHEBI:15378"/>
        <dbReference type="ChEBI" id="CHEBI:29985"/>
        <dbReference type="ChEBI" id="CHEBI:30616"/>
        <dbReference type="ChEBI" id="CHEBI:43474"/>
        <dbReference type="ChEBI" id="CHEBI:58359"/>
        <dbReference type="ChEBI" id="CHEBI:78515"/>
        <dbReference type="ChEBI" id="CHEBI:78516"/>
        <dbReference type="ChEBI" id="CHEBI:456216"/>
    </reaction>
</comment>
<comment type="subunit">
    <text evidence="1">Heterotrimer of A, B and C subunits.</text>
</comment>
<comment type="similarity">
    <text evidence="1">Belongs to the GatB/GatE family. GatB subfamily.</text>
</comment>
<accession>Q2JXB3</accession>
<sequence>MTVAAPAKVEYEAVIGLEVHCQLSTRSKIFSSSATAFGAPPNTQIDPVCMGLPGTLPVLNEKVLEYAVKAGLALNCTIAPYSKFDRKQYFYPDLPKNYQISQYDLPIATHGWVEIQLSDGRSKRIGITRLHIEEDAGKLVHAGSDRLSGSSYSLVDFNRAGVPLIEIVSEPDIRTGEEAAEYVQELRRILRYAGLCDGNLQEGSLRCDVNISVRPLGSPTFGTKVEIKNMNSFNAIQRAIEYEFNRQVKAVEAGEPIVQETRLWEENSQRTISMRKKEGSSDYRYFPEPDLPPIRVTEAQKARWQAELPELPSVKRRRYQQVYGLSVYDSRYLSDERNTAEYFEAVVAAGADPKAAANWMMSDIASYLNTHKLDYPDIALKPETLAELIGLIEQGTISSKIAKEILPELLEKGGSARALVEAKGLTQISDSSLLEPMIAEVLAENPEQLQQYREGKTKLFGYFVGQLMKKTQGRADPKLANELLKRHLDG</sequence>
<gene>
    <name evidence="1" type="primary">gatB</name>
    <name type="ordered locus">CYA_0359</name>
</gene>
<keyword id="KW-0067">ATP-binding</keyword>
<keyword id="KW-0436">Ligase</keyword>
<keyword id="KW-0547">Nucleotide-binding</keyword>
<keyword id="KW-0648">Protein biosynthesis</keyword>
<feature type="chain" id="PRO_0000241288" description="Aspartyl/glutamyl-tRNA(Asn/Gln) amidotransferase subunit B">
    <location>
        <begin position="1"/>
        <end position="490"/>
    </location>
</feature>
<organism>
    <name type="scientific">Synechococcus sp. (strain JA-3-3Ab)</name>
    <name type="common">Cyanobacteria bacterium Yellowstone A-Prime</name>
    <dbReference type="NCBI Taxonomy" id="321327"/>
    <lineage>
        <taxon>Bacteria</taxon>
        <taxon>Bacillati</taxon>
        <taxon>Cyanobacteriota</taxon>
        <taxon>Cyanophyceae</taxon>
        <taxon>Synechococcales</taxon>
        <taxon>Synechococcaceae</taxon>
        <taxon>Synechococcus</taxon>
    </lineage>
</organism>
<name>GATB_SYNJA</name>
<evidence type="ECO:0000255" key="1">
    <source>
        <dbReference type="HAMAP-Rule" id="MF_00121"/>
    </source>
</evidence>
<proteinExistence type="inferred from homology"/>
<dbReference type="EC" id="6.3.5.-" evidence="1"/>
<dbReference type="EMBL" id="CP000239">
    <property type="protein sequence ID" value="ABC98579.1"/>
    <property type="molecule type" value="Genomic_DNA"/>
</dbReference>
<dbReference type="RefSeq" id="WP_011429268.1">
    <property type="nucleotide sequence ID" value="NC_007775.1"/>
</dbReference>
<dbReference type="SMR" id="Q2JXB3"/>
<dbReference type="STRING" id="321327.CYA_0359"/>
<dbReference type="KEGG" id="cya:CYA_0359"/>
<dbReference type="eggNOG" id="COG0064">
    <property type="taxonomic scope" value="Bacteria"/>
</dbReference>
<dbReference type="HOGENOM" id="CLU_019240_0_0_3"/>
<dbReference type="OrthoDB" id="9804078at2"/>
<dbReference type="Proteomes" id="UP000008818">
    <property type="component" value="Chromosome"/>
</dbReference>
<dbReference type="GO" id="GO:0050566">
    <property type="term" value="F:asparaginyl-tRNA synthase (glutamine-hydrolyzing) activity"/>
    <property type="evidence" value="ECO:0007669"/>
    <property type="project" value="RHEA"/>
</dbReference>
<dbReference type="GO" id="GO:0005524">
    <property type="term" value="F:ATP binding"/>
    <property type="evidence" value="ECO:0007669"/>
    <property type="project" value="UniProtKB-KW"/>
</dbReference>
<dbReference type="GO" id="GO:0050567">
    <property type="term" value="F:glutaminyl-tRNA synthase (glutamine-hydrolyzing) activity"/>
    <property type="evidence" value="ECO:0007669"/>
    <property type="project" value="UniProtKB-UniRule"/>
</dbReference>
<dbReference type="GO" id="GO:0070681">
    <property type="term" value="P:glutaminyl-tRNAGln biosynthesis via transamidation"/>
    <property type="evidence" value="ECO:0007669"/>
    <property type="project" value="TreeGrafter"/>
</dbReference>
<dbReference type="GO" id="GO:0006412">
    <property type="term" value="P:translation"/>
    <property type="evidence" value="ECO:0007669"/>
    <property type="project" value="UniProtKB-UniRule"/>
</dbReference>
<dbReference type="FunFam" id="1.10.10.410:FF:000001">
    <property type="entry name" value="Aspartyl/glutamyl-tRNA(Asn/Gln) amidotransferase subunit B"/>
    <property type="match status" value="1"/>
</dbReference>
<dbReference type="FunFam" id="1.10.150.380:FF:000001">
    <property type="entry name" value="Aspartyl/glutamyl-tRNA(Asn/Gln) amidotransferase subunit B"/>
    <property type="match status" value="1"/>
</dbReference>
<dbReference type="Gene3D" id="1.10.10.410">
    <property type="match status" value="1"/>
</dbReference>
<dbReference type="Gene3D" id="1.10.150.380">
    <property type="entry name" value="GatB domain, N-terminal subdomain"/>
    <property type="match status" value="1"/>
</dbReference>
<dbReference type="HAMAP" id="MF_00121">
    <property type="entry name" value="GatB"/>
    <property type="match status" value="1"/>
</dbReference>
<dbReference type="InterPro" id="IPR017959">
    <property type="entry name" value="Asn/Gln-tRNA_amidoTrfase_suB/E"/>
</dbReference>
<dbReference type="InterPro" id="IPR006075">
    <property type="entry name" value="Asn/Gln-tRNA_Trfase_suB/E_cat"/>
</dbReference>
<dbReference type="InterPro" id="IPR018027">
    <property type="entry name" value="Asn/Gln_amidotransferase"/>
</dbReference>
<dbReference type="InterPro" id="IPR003789">
    <property type="entry name" value="Asn/Gln_tRNA_amidoTrase-B-like"/>
</dbReference>
<dbReference type="InterPro" id="IPR004413">
    <property type="entry name" value="GatB"/>
</dbReference>
<dbReference type="InterPro" id="IPR042114">
    <property type="entry name" value="GatB_C_1"/>
</dbReference>
<dbReference type="InterPro" id="IPR023168">
    <property type="entry name" value="GatB_Yqey_C_2"/>
</dbReference>
<dbReference type="InterPro" id="IPR017958">
    <property type="entry name" value="Gln-tRNA_amidoTrfase_suB_CS"/>
</dbReference>
<dbReference type="InterPro" id="IPR014746">
    <property type="entry name" value="Gln_synth/guanido_kin_cat_dom"/>
</dbReference>
<dbReference type="NCBIfam" id="TIGR00133">
    <property type="entry name" value="gatB"/>
    <property type="match status" value="1"/>
</dbReference>
<dbReference type="NCBIfam" id="NF004012">
    <property type="entry name" value="PRK05477.1-2"/>
    <property type="match status" value="1"/>
</dbReference>
<dbReference type="NCBIfam" id="NF004014">
    <property type="entry name" value="PRK05477.1-4"/>
    <property type="match status" value="1"/>
</dbReference>
<dbReference type="PANTHER" id="PTHR11659">
    <property type="entry name" value="GLUTAMYL-TRNA GLN AMIDOTRANSFERASE SUBUNIT B MITOCHONDRIAL AND PROKARYOTIC PET112-RELATED"/>
    <property type="match status" value="1"/>
</dbReference>
<dbReference type="PANTHER" id="PTHR11659:SF0">
    <property type="entry name" value="GLUTAMYL-TRNA(GLN) AMIDOTRANSFERASE SUBUNIT B, MITOCHONDRIAL"/>
    <property type="match status" value="1"/>
</dbReference>
<dbReference type="Pfam" id="PF02934">
    <property type="entry name" value="GatB_N"/>
    <property type="match status" value="1"/>
</dbReference>
<dbReference type="Pfam" id="PF02637">
    <property type="entry name" value="GatB_Yqey"/>
    <property type="match status" value="1"/>
</dbReference>
<dbReference type="SMART" id="SM00845">
    <property type="entry name" value="GatB_Yqey"/>
    <property type="match status" value="1"/>
</dbReference>
<dbReference type="SUPFAM" id="SSF89095">
    <property type="entry name" value="GatB/YqeY motif"/>
    <property type="match status" value="1"/>
</dbReference>
<dbReference type="SUPFAM" id="SSF55931">
    <property type="entry name" value="Glutamine synthetase/guanido kinase"/>
    <property type="match status" value="1"/>
</dbReference>
<dbReference type="PROSITE" id="PS01234">
    <property type="entry name" value="GATB"/>
    <property type="match status" value="1"/>
</dbReference>